<organism>
    <name type="scientific">Pseudomonas fluorescens (strain Pf0-1)</name>
    <dbReference type="NCBI Taxonomy" id="205922"/>
    <lineage>
        <taxon>Bacteria</taxon>
        <taxon>Pseudomonadati</taxon>
        <taxon>Pseudomonadota</taxon>
        <taxon>Gammaproteobacteria</taxon>
        <taxon>Pseudomonadales</taxon>
        <taxon>Pseudomonadaceae</taxon>
        <taxon>Pseudomonas</taxon>
    </lineage>
</organism>
<comment type="function">
    <text evidence="1">Catalyzes the interconversion of methylthioribose-1-phosphate (MTR-1-P) into methylthioribulose-1-phosphate (MTRu-1-P).</text>
</comment>
<comment type="catalytic activity">
    <reaction evidence="1">
        <text>5-(methylsulfanyl)-alpha-D-ribose 1-phosphate = 5-(methylsulfanyl)-D-ribulose 1-phosphate</text>
        <dbReference type="Rhea" id="RHEA:19989"/>
        <dbReference type="ChEBI" id="CHEBI:58533"/>
        <dbReference type="ChEBI" id="CHEBI:58548"/>
        <dbReference type="EC" id="5.3.1.23"/>
    </reaction>
</comment>
<comment type="pathway">
    <text evidence="1">Amino-acid biosynthesis; L-methionine biosynthesis via salvage pathway; L-methionine from S-methyl-5-thio-alpha-D-ribose 1-phosphate: step 1/6.</text>
</comment>
<comment type="similarity">
    <text evidence="2">Belongs to the eIF-2B alpha/beta/delta subunits family. MtnA subfamily.</text>
</comment>
<feature type="chain" id="PRO_0000357224" description="Methylthioribose-1-phosphate isomerase">
    <location>
        <begin position="1"/>
        <end position="358"/>
    </location>
</feature>
<feature type="active site" description="Proton donor" evidence="1">
    <location>
        <position position="246"/>
    </location>
</feature>
<feature type="binding site" evidence="1">
    <location>
        <begin position="54"/>
        <end position="56"/>
    </location>
    <ligand>
        <name>substrate</name>
    </ligand>
</feature>
<feature type="binding site" evidence="1">
    <location>
        <position position="96"/>
    </location>
    <ligand>
        <name>substrate</name>
    </ligand>
</feature>
<feature type="binding site" evidence="1">
    <location>
        <position position="205"/>
    </location>
    <ligand>
        <name>substrate</name>
    </ligand>
</feature>
<feature type="binding site" evidence="1">
    <location>
        <begin position="256"/>
        <end position="257"/>
    </location>
    <ligand>
        <name>substrate</name>
    </ligand>
</feature>
<feature type="site" description="Transition state stabilizer" evidence="1">
    <location>
        <position position="166"/>
    </location>
</feature>
<reference key="1">
    <citation type="journal article" date="2009" name="Genome Biol.">
        <title>Genomic and genetic analyses of diversity and plant interactions of Pseudomonas fluorescens.</title>
        <authorList>
            <person name="Silby M.W."/>
            <person name="Cerdeno-Tarraga A.M."/>
            <person name="Vernikos G.S."/>
            <person name="Giddens S.R."/>
            <person name="Jackson R.W."/>
            <person name="Preston G.M."/>
            <person name="Zhang X.-X."/>
            <person name="Moon C.D."/>
            <person name="Gehrig S.M."/>
            <person name="Godfrey S.A.C."/>
            <person name="Knight C.G."/>
            <person name="Malone J.G."/>
            <person name="Robinson Z."/>
            <person name="Spiers A.J."/>
            <person name="Harris S."/>
            <person name="Challis G.L."/>
            <person name="Yaxley A.M."/>
            <person name="Harris D."/>
            <person name="Seeger K."/>
            <person name="Murphy L."/>
            <person name="Rutter S."/>
            <person name="Squares R."/>
            <person name="Quail M.A."/>
            <person name="Saunders E."/>
            <person name="Mavromatis K."/>
            <person name="Brettin T.S."/>
            <person name="Bentley S.D."/>
            <person name="Hothersall J."/>
            <person name="Stephens E."/>
            <person name="Thomas C.M."/>
            <person name="Parkhill J."/>
            <person name="Levy S.B."/>
            <person name="Rainey P.B."/>
            <person name="Thomson N.R."/>
        </authorList>
    </citation>
    <scope>NUCLEOTIDE SEQUENCE [LARGE SCALE GENOMIC DNA]</scope>
    <source>
        <strain>Pf0-1</strain>
    </source>
</reference>
<keyword id="KW-0028">Amino-acid biosynthesis</keyword>
<keyword id="KW-0413">Isomerase</keyword>
<keyword id="KW-0486">Methionine biosynthesis</keyword>
<sequence length="358" mass="38720">MRDRLLAAEKVKAIDWRDGALHLLDQRVLPFEENWIAYTSAAGVAEAIRSMVVRGAPAIGISAAYGIVLAARARIAEGGDWYAALEEDFMLLADSRPTAVNLFWALNRMHDRLDRLKENADPLAALEAEAIAIHESDREANLTMAQLGVDLIRKHQGNAQAILTHCNTGALATGGFGTALGVIRAAFIEGMVERVYADETRPWLQGSRLTAWELANEGIPVTLNADSAAAHIMKTKGVTWVIVGADRITANGDVANKIGTYQLAVNAMHHGVRFMVVAPSSTIDMNLASGDDIPIEERDGAELLEVGGKRVGADVEAFNPVFDVTPADLIDAIVTEKGIVERPDTAKMAQLMCRKRLH</sequence>
<accession>Q3K8T8</accession>
<dbReference type="EC" id="5.3.1.23" evidence="1"/>
<dbReference type="EMBL" id="CP000094">
    <property type="protein sequence ID" value="ABA75816.1"/>
    <property type="molecule type" value="Genomic_DNA"/>
</dbReference>
<dbReference type="RefSeq" id="WP_011335374.1">
    <property type="nucleotide sequence ID" value="NC_007492.2"/>
</dbReference>
<dbReference type="SMR" id="Q3K8T8"/>
<dbReference type="KEGG" id="pfo:Pfl01_4079"/>
<dbReference type="eggNOG" id="COG0182">
    <property type="taxonomic scope" value="Bacteria"/>
</dbReference>
<dbReference type="HOGENOM" id="CLU_016218_1_2_6"/>
<dbReference type="UniPathway" id="UPA00904">
    <property type="reaction ID" value="UER00874"/>
</dbReference>
<dbReference type="Proteomes" id="UP000002704">
    <property type="component" value="Chromosome"/>
</dbReference>
<dbReference type="GO" id="GO:0046523">
    <property type="term" value="F:S-methyl-5-thioribose-1-phosphate isomerase activity"/>
    <property type="evidence" value="ECO:0007669"/>
    <property type="project" value="UniProtKB-UniRule"/>
</dbReference>
<dbReference type="GO" id="GO:0019509">
    <property type="term" value="P:L-methionine salvage from methylthioadenosine"/>
    <property type="evidence" value="ECO:0007669"/>
    <property type="project" value="UniProtKB-UniRule"/>
</dbReference>
<dbReference type="FunFam" id="1.20.120.420:FF:000008">
    <property type="entry name" value="Methylthioribose-1-phosphate isomerase"/>
    <property type="match status" value="1"/>
</dbReference>
<dbReference type="FunFam" id="3.40.50.10470:FF:000006">
    <property type="entry name" value="Methylthioribose-1-phosphate isomerase"/>
    <property type="match status" value="1"/>
</dbReference>
<dbReference type="Gene3D" id="1.20.120.420">
    <property type="entry name" value="translation initiation factor eif-2b, domain 1"/>
    <property type="match status" value="1"/>
</dbReference>
<dbReference type="Gene3D" id="3.40.50.10470">
    <property type="entry name" value="Translation initiation factor eif-2b, domain 2"/>
    <property type="match status" value="1"/>
</dbReference>
<dbReference type="HAMAP" id="MF_01678">
    <property type="entry name" value="Salvage_MtnA"/>
    <property type="match status" value="1"/>
</dbReference>
<dbReference type="InterPro" id="IPR000649">
    <property type="entry name" value="IF-2B-related"/>
</dbReference>
<dbReference type="InterPro" id="IPR005251">
    <property type="entry name" value="IF-M1Pi"/>
</dbReference>
<dbReference type="InterPro" id="IPR042529">
    <property type="entry name" value="IF_2B-like_C"/>
</dbReference>
<dbReference type="InterPro" id="IPR011559">
    <property type="entry name" value="Initiation_fac_2B_a/b/d"/>
</dbReference>
<dbReference type="InterPro" id="IPR027363">
    <property type="entry name" value="M1Pi_N"/>
</dbReference>
<dbReference type="InterPro" id="IPR037171">
    <property type="entry name" value="NagB/RpiA_transferase-like"/>
</dbReference>
<dbReference type="NCBIfam" id="TIGR00524">
    <property type="entry name" value="eIF-2B_rel"/>
    <property type="match status" value="1"/>
</dbReference>
<dbReference type="NCBIfam" id="NF004326">
    <property type="entry name" value="PRK05720.1"/>
    <property type="match status" value="1"/>
</dbReference>
<dbReference type="NCBIfam" id="TIGR00512">
    <property type="entry name" value="salvage_mtnA"/>
    <property type="match status" value="1"/>
</dbReference>
<dbReference type="PANTHER" id="PTHR43475">
    <property type="entry name" value="METHYLTHIORIBOSE-1-PHOSPHATE ISOMERASE"/>
    <property type="match status" value="1"/>
</dbReference>
<dbReference type="PANTHER" id="PTHR43475:SF1">
    <property type="entry name" value="METHYLTHIORIBOSE-1-PHOSPHATE ISOMERASE"/>
    <property type="match status" value="1"/>
</dbReference>
<dbReference type="Pfam" id="PF01008">
    <property type="entry name" value="IF-2B"/>
    <property type="match status" value="1"/>
</dbReference>
<dbReference type="SUPFAM" id="SSF100950">
    <property type="entry name" value="NagB/RpiA/CoA transferase-like"/>
    <property type="match status" value="1"/>
</dbReference>
<gene>
    <name evidence="1" type="primary">mtnA</name>
    <name type="ordered locus">Pfl01_4079</name>
</gene>
<name>MTNA_PSEPF</name>
<protein>
    <recommendedName>
        <fullName evidence="1">Methylthioribose-1-phosphate isomerase</fullName>
        <shortName evidence="1">M1Pi</shortName>
        <shortName evidence="1">MTR-1-P isomerase</shortName>
        <ecNumber evidence="1">5.3.1.23</ecNumber>
    </recommendedName>
    <alternativeName>
        <fullName evidence="1">S-methyl-5-thioribose-1-phosphate isomerase</fullName>
    </alternativeName>
</protein>
<evidence type="ECO:0000255" key="1">
    <source>
        <dbReference type="HAMAP-Rule" id="MF_01678"/>
    </source>
</evidence>
<evidence type="ECO:0000305" key="2"/>
<proteinExistence type="inferred from homology"/>